<organism>
    <name type="scientific">Onion yellows phytoplasma (strain OY-M)</name>
    <dbReference type="NCBI Taxonomy" id="262768"/>
    <lineage>
        <taxon>Bacteria</taxon>
        <taxon>Bacillati</taxon>
        <taxon>Mycoplasmatota</taxon>
        <taxon>Mollicutes</taxon>
        <taxon>Acholeplasmatales</taxon>
        <taxon>Acholeplasmataceae</taxon>
        <taxon>Candidatus Phytoplasma</taxon>
        <taxon>16SrI (Aster yellows group)</taxon>
    </lineage>
</organism>
<dbReference type="EMBL" id="AP006628">
    <property type="protein sequence ID" value="BAD04308.1"/>
    <property type="molecule type" value="Genomic_DNA"/>
</dbReference>
<dbReference type="SMR" id="P61692"/>
<dbReference type="STRING" id="262768.PAM_223"/>
<dbReference type="KEGG" id="poy:PAM_223"/>
<dbReference type="eggNOG" id="COG0361">
    <property type="taxonomic scope" value="Bacteria"/>
</dbReference>
<dbReference type="HOGENOM" id="CLU_151267_4_0_14"/>
<dbReference type="BioCyc" id="OYEL262768:G1G26-269-MONOMER"/>
<dbReference type="Proteomes" id="UP000002523">
    <property type="component" value="Chromosome"/>
</dbReference>
<dbReference type="GO" id="GO:0005829">
    <property type="term" value="C:cytosol"/>
    <property type="evidence" value="ECO:0007669"/>
    <property type="project" value="TreeGrafter"/>
</dbReference>
<dbReference type="GO" id="GO:0043022">
    <property type="term" value="F:ribosome binding"/>
    <property type="evidence" value="ECO:0007669"/>
    <property type="project" value="UniProtKB-UniRule"/>
</dbReference>
<dbReference type="GO" id="GO:0019843">
    <property type="term" value="F:rRNA binding"/>
    <property type="evidence" value="ECO:0007669"/>
    <property type="project" value="UniProtKB-UniRule"/>
</dbReference>
<dbReference type="GO" id="GO:0003743">
    <property type="term" value="F:translation initiation factor activity"/>
    <property type="evidence" value="ECO:0007669"/>
    <property type="project" value="UniProtKB-UniRule"/>
</dbReference>
<dbReference type="CDD" id="cd04451">
    <property type="entry name" value="S1_IF1"/>
    <property type="match status" value="1"/>
</dbReference>
<dbReference type="FunFam" id="2.40.50.140:FF:000002">
    <property type="entry name" value="Translation initiation factor IF-1"/>
    <property type="match status" value="1"/>
</dbReference>
<dbReference type="Gene3D" id="2.40.50.140">
    <property type="entry name" value="Nucleic acid-binding proteins"/>
    <property type="match status" value="1"/>
</dbReference>
<dbReference type="HAMAP" id="MF_00075">
    <property type="entry name" value="IF_1"/>
    <property type="match status" value="1"/>
</dbReference>
<dbReference type="InterPro" id="IPR012340">
    <property type="entry name" value="NA-bd_OB-fold"/>
</dbReference>
<dbReference type="InterPro" id="IPR006196">
    <property type="entry name" value="RNA-binding_domain_S1_IF1"/>
</dbReference>
<dbReference type="InterPro" id="IPR004368">
    <property type="entry name" value="TIF_IF1"/>
</dbReference>
<dbReference type="NCBIfam" id="TIGR00008">
    <property type="entry name" value="infA"/>
    <property type="match status" value="1"/>
</dbReference>
<dbReference type="PANTHER" id="PTHR33370">
    <property type="entry name" value="TRANSLATION INITIATION FACTOR IF-1, CHLOROPLASTIC"/>
    <property type="match status" value="1"/>
</dbReference>
<dbReference type="PANTHER" id="PTHR33370:SF1">
    <property type="entry name" value="TRANSLATION INITIATION FACTOR IF-1, CHLOROPLASTIC"/>
    <property type="match status" value="1"/>
</dbReference>
<dbReference type="Pfam" id="PF01176">
    <property type="entry name" value="eIF-1a"/>
    <property type="match status" value="1"/>
</dbReference>
<dbReference type="SUPFAM" id="SSF50249">
    <property type="entry name" value="Nucleic acid-binding proteins"/>
    <property type="match status" value="1"/>
</dbReference>
<dbReference type="PROSITE" id="PS50832">
    <property type="entry name" value="S1_IF1_TYPE"/>
    <property type="match status" value="1"/>
</dbReference>
<proteinExistence type="inferred from homology"/>
<sequence>MSKNNLNETESKIEIEAKVVELLSNDKFKVELPNKKTIIAYVSGKIRINNIRILPGDKVRIELSPYDPTRARITYRFK</sequence>
<name>IF1_ONYPE</name>
<keyword id="KW-0963">Cytoplasm</keyword>
<keyword id="KW-0396">Initiation factor</keyword>
<keyword id="KW-0648">Protein biosynthesis</keyword>
<keyword id="KW-0694">RNA-binding</keyword>
<keyword id="KW-0699">rRNA-binding</keyword>
<protein>
    <recommendedName>
        <fullName evidence="1">Translation initiation factor IF-1</fullName>
    </recommendedName>
</protein>
<gene>
    <name evidence="1" type="primary">infA</name>
    <name type="ordered locus">PAM_223</name>
</gene>
<comment type="function">
    <text evidence="1">One of the essential components for the initiation of protein synthesis. Stabilizes the binding of IF-2 and IF-3 on the 30S subunit to which N-formylmethionyl-tRNA(fMet) subsequently binds. Helps modulate mRNA selection, yielding the 30S pre-initiation complex (PIC). Upon addition of the 50S ribosomal subunit IF-1, IF-2 and IF-3 are released leaving the mature 70S translation initiation complex.</text>
</comment>
<comment type="subunit">
    <text evidence="1">Component of the 30S ribosomal translation pre-initiation complex which assembles on the 30S ribosome in the order IF-2 and IF-3, IF-1 and N-formylmethionyl-tRNA(fMet); mRNA recruitment can occur at any time during PIC assembly.</text>
</comment>
<comment type="subcellular location">
    <subcellularLocation>
        <location evidence="1">Cytoplasm</location>
    </subcellularLocation>
</comment>
<comment type="similarity">
    <text evidence="1">Belongs to the IF-1 family.</text>
</comment>
<evidence type="ECO:0000255" key="1">
    <source>
        <dbReference type="HAMAP-Rule" id="MF_00075"/>
    </source>
</evidence>
<feature type="chain" id="PRO_0000095837" description="Translation initiation factor IF-1">
    <location>
        <begin position="1"/>
        <end position="78"/>
    </location>
</feature>
<feature type="domain" description="S1-like" evidence="1">
    <location>
        <begin position="2"/>
        <end position="78"/>
    </location>
</feature>
<reference key="1">
    <citation type="journal article" date="2004" name="Nat. Genet.">
        <title>Reductive evolution suggested from the complete genome sequence of a plant-pathogenic phytoplasma.</title>
        <authorList>
            <person name="Oshima K."/>
            <person name="Kakizawa S."/>
            <person name="Nishigawa H."/>
            <person name="Jung H.-Y."/>
            <person name="Wei W."/>
            <person name="Suzuki S."/>
            <person name="Arashida R."/>
            <person name="Nakata D."/>
            <person name="Miyata S."/>
            <person name="Ugaki M."/>
            <person name="Namba S."/>
        </authorList>
    </citation>
    <scope>NUCLEOTIDE SEQUENCE [LARGE SCALE GENOMIC DNA]</scope>
    <source>
        <strain>OY-M</strain>
    </source>
</reference>
<accession>P61692</accession>